<reference key="1">
    <citation type="journal article" date="2007" name="J. Bacteriol.">
        <title>The complete genome sequence of Roseobacter denitrificans reveals a mixotrophic rather than photosynthetic metabolism.</title>
        <authorList>
            <person name="Swingley W.D."/>
            <person name="Sadekar S."/>
            <person name="Mastrian S.D."/>
            <person name="Matthies H.J."/>
            <person name="Hao J."/>
            <person name="Ramos H."/>
            <person name="Acharya C.R."/>
            <person name="Conrad A.L."/>
            <person name="Taylor H.L."/>
            <person name="Dejesa L.C."/>
            <person name="Shah M.K."/>
            <person name="O'Huallachain M.E."/>
            <person name="Lince M.T."/>
            <person name="Blankenship R.E."/>
            <person name="Beatty J.T."/>
            <person name="Touchman J.W."/>
        </authorList>
    </citation>
    <scope>NUCLEOTIDE SEQUENCE [LARGE SCALE GENOMIC DNA]</scope>
    <source>
        <strain>ATCC 33942 / OCh 114</strain>
    </source>
</reference>
<name>PUR9_ROSDO</name>
<keyword id="KW-0378">Hydrolase</keyword>
<keyword id="KW-0511">Multifunctional enzyme</keyword>
<keyword id="KW-0658">Purine biosynthesis</keyword>
<keyword id="KW-1185">Reference proteome</keyword>
<keyword id="KW-0808">Transferase</keyword>
<proteinExistence type="inferred from homology"/>
<feature type="chain" id="PRO_1000057912" description="Bifunctional purine biosynthesis protein PurH">
    <location>
        <begin position="1"/>
        <end position="528"/>
    </location>
</feature>
<feature type="domain" description="MGS-like" evidence="2">
    <location>
        <begin position="2"/>
        <end position="149"/>
    </location>
</feature>
<protein>
    <recommendedName>
        <fullName evidence="1">Bifunctional purine biosynthesis protein PurH</fullName>
    </recommendedName>
    <domain>
        <recommendedName>
            <fullName evidence="1">Phosphoribosylaminoimidazolecarboxamide formyltransferase</fullName>
            <ecNumber evidence="1">2.1.2.3</ecNumber>
        </recommendedName>
        <alternativeName>
            <fullName evidence="1">AICAR transformylase</fullName>
        </alternativeName>
    </domain>
    <domain>
        <recommendedName>
            <fullName evidence="1">IMP cyclohydrolase</fullName>
            <ecNumber evidence="1">3.5.4.10</ecNumber>
        </recommendedName>
        <alternativeName>
            <fullName evidence="1">ATIC</fullName>
        </alternativeName>
        <alternativeName>
            <fullName evidence="1">IMP synthase</fullName>
        </alternativeName>
        <alternativeName>
            <fullName evidence="1">Inosinicase</fullName>
        </alternativeName>
    </domain>
</protein>
<gene>
    <name evidence="1" type="primary">purH</name>
    <name type="ordered locus">RD1_0655</name>
</gene>
<organism>
    <name type="scientific">Roseobacter denitrificans (strain ATCC 33942 / OCh 114)</name>
    <name type="common">Erythrobacter sp. (strain OCh 114)</name>
    <name type="synonym">Roseobacter denitrificans</name>
    <dbReference type="NCBI Taxonomy" id="375451"/>
    <lineage>
        <taxon>Bacteria</taxon>
        <taxon>Pseudomonadati</taxon>
        <taxon>Pseudomonadota</taxon>
        <taxon>Alphaproteobacteria</taxon>
        <taxon>Rhodobacterales</taxon>
        <taxon>Roseobacteraceae</taxon>
        <taxon>Roseobacter</taxon>
    </lineage>
</organism>
<sequence length="528" mass="55891">MTDLAPLRRALLSVSDKTGLVALGKALAARGVELLSTGGTARALRDAGLEVKDVAEVTGFPEMMDGRVKTLHPAVHGGLLALRDNDDHLAAMQEHGIAGIDLVVVNLYPFEQTVAKGAQYDEVIENIDIGGPAMIRSAAKNHGFVSVVVDVEDYDVLIAQLEAYDGHTTYALRQRLAQTAYARTAAYDTAVSTWMAAQVGEPPRRRSFGGTLAQTLRYGENPHQDAAFYLDGSNSPGVATARQLQGKELSYNNINDTDAAFELVSEFDQGDGPACAIIKHANPCGVARAETLTEAYRRAFDCDRTSAFGGIIALNQPLDGATAEEISSIFTEVVIAPGADAEAQEVFAKKKNLRLLTTDGLADPTAPGLAIRQVSGGYLVQDRDTGRLSADALQIVTKRAPSDQEMADLMFAWTVAKHVKSNAIIYVKDGATVGVGAGQMSRVDSTRIAARKAQDMAEAMGLPAPLTQGSVVASDAFFPFADGLITAAEAGATALIQPGGSMRDDEVIAAADEAGLAMVFTGMRHFRH</sequence>
<dbReference type="EC" id="2.1.2.3" evidence="1"/>
<dbReference type="EC" id="3.5.4.10" evidence="1"/>
<dbReference type="EMBL" id="CP000362">
    <property type="protein sequence ID" value="ABG30353.1"/>
    <property type="molecule type" value="Genomic_DNA"/>
</dbReference>
<dbReference type="RefSeq" id="WP_011566975.1">
    <property type="nucleotide sequence ID" value="NC_008209.1"/>
</dbReference>
<dbReference type="SMR" id="Q16CE0"/>
<dbReference type="STRING" id="375451.RD1_0655"/>
<dbReference type="KEGG" id="rde:RD1_0655"/>
<dbReference type="eggNOG" id="COG0138">
    <property type="taxonomic scope" value="Bacteria"/>
</dbReference>
<dbReference type="HOGENOM" id="CLU_016316_5_2_5"/>
<dbReference type="OrthoDB" id="9802065at2"/>
<dbReference type="UniPathway" id="UPA00074">
    <property type="reaction ID" value="UER00133"/>
</dbReference>
<dbReference type="UniPathway" id="UPA00074">
    <property type="reaction ID" value="UER00135"/>
</dbReference>
<dbReference type="Proteomes" id="UP000007029">
    <property type="component" value="Chromosome"/>
</dbReference>
<dbReference type="GO" id="GO:0005829">
    <property type="term" value="C:cytosol"/>
    <property type="evidence" value="ECO:0007669"/>
    <property type="project" value="TreeGrafter"/>
</dbReference>
<dbReference type="GO" id="GO:0003937">
    <property type="term" value="F:IMP cyclohydrolase activity"/>
    <property type="evidence" value="ECO:0007669"/>
    <property type="project" value="UniProtKB-UniRule"/>
</dbReference>
<dbReference type="GO" id="GO:0004643">
    <property type="term" value="F:phosphoribosylaminoimidazolecarboxamide formyltransferase activity"/>
    <property type="evidence" value="ECO:0007669"/>
    <property type="project" value="UniProtKB-UniRule"/>
</dbReference>
<dbReference type="GO" id="GO:0006189">
    <property type="term" value="P:'de novo' IMP biosynthetic process"/>
    <property type="evidence" value="ECO:0007669"/>
    <property type="project" value="UniProtKB-UniRule"/>
</dbReference>
<dbReference type="CDD" id="cd01421">
    <property type="entry name" value="IMPCH"/>
    <property type="match status" value="1"/>
</dbReference>
<dbReference type="FunFam" id="3.40.140.20:FF:000001">
    <property type="entry name" value="Bifunctional purine biosynthesis protein PurH"/>
    <property type="match status" value="1"/>
</dbReference>
<dbReference type="FunFam" id="3.40.140.20:FF:000002">
    <property type="entry name" value="Bifunctional purine biosynthesis protein PurH"/>
    <property type="match status" value="1"/>
</dbReference>
<dbReference type="FunFam" id="3.40.50.1380:FF:000001">
    <property type="entry name" value="Bifunctional purine biosynthesis protein PurH"/>
    <property type="match status" value="1"/>
</dbReference>
<dbReference type="Gene3D" id="3.40.140.20">
    <property type="match status" value="2"/>
</dbReference>
<dbReference type="Gene3D" id="3.40.50.1380">
    <property type="entry name" value="Methylglyoxal synthase-like domain"/>
    <property type="match status" value="1"/>
</dbReference>
<dbReference type="HAMAP" id="MF_00139">
    <property type="entry name" value="PurH"/>
    <property type="match status" value="1"/>
</dbReference>
<dbReference type="InterPro" id="IPR024051">
    <property type="entry name" value="AICAR_Tfase_dup_dom_sf"/>
</dbReference>
<dbReference type="InterPro" id="IPR016193">
    <property type="entry name" value="Cytidine_deaminase-like"/>
</dbReference>
<dbReference type="InterPro" id="IPR011607">
    <property type="entry name" value="MGS-like_dom"/>
</dbReference>
<dbReference type="InterPro" id="IPR036914">
    <property type="entry name" value="MGS-like_dom_sf"/>
</dbReference>
<dbReference type="InterPro" id="IPR002695">
    <property type="entry name" value="PurH-like"/>
</dbReference>
<dbReference type="NCBIfam" id="NF002049">
    <property type="entry name" value="PRK00881.1"/>
    <property type="match status" value="1"/>
</dbReference>
<dbReference type="NCBIfam" id="TIGR00355">
    <property type="entry name" value="purH"/>
    <property type="match status" value="1"/>
</dbReference>
<dbReference type="PANTHER" id="PTHR11692:SF0">
    <property type="entry name" value="BIFUNCTIONAL PURINE BIOSYNTHESIS PROTEIN ATIC"/>
    <property type="match status" value="1"/>
</dbReference>
<dbReference type="PANTHER" id="PTHR11692">
    <property type="entry name" value="BIFUNCTIONAL PURINE BIOSYNTHESIS PROTEIN PURH"/>
    <property type="match status" value="1"/>
</dbReference>
<dbReference type="Pfam" id="PF01808">
    <property type="entry name" value="AICARFT_IMPCHas"/>
    <property type="match status" value="1"/>
</dbReference>
<dbReference type="Pfam" id="PF02142">
    <property type="entry name" value="MGS"/>
    <property type="match status" value="1"/>
</dbReference>
<dbReference type="PIRSF" id="PIRSF000414">
    <property type="entry name" value="AICARFT_IMPCHas"/>
    <property type="match status" value="1"/>
</dbReference>
<dbReference type="SMART" id="SM00798">
    <property type="entry name" value="AICARFT_IMPCHas"/>
    <property type="match status" value="1"/>
</dbReference>
<dbReference type="SMART" id="SM00851">
    <property type="entry name" value="MGS"/>
    <property type="match status" value="1"/>
</dbReference>
<dbReference type="SUPFAM" id="SSF53927">
    <property type="entry name" value="Cytidine deaminase-like"/>
    <property type="match status" value="1"/>
</dbReference>
<dbReference type="SUPFAM" id="SSF52335">
    <property type="entry name" value="Methylglyoxal synthase-like"/>
    <property type="match status" value="1"/>
</dbReference>
<dbReference type="PROSITE" id="PS51855">
    <property type="entry name" value="MGS"/>
    <property type="match status" value="1"/>
</dbReference>
<accession>Q16CE0</accession>
<evidence type="ECO:0000255" key="1">
    <source>
        <dbReference type="HAMAP-Rule" id="MF_00139"/>
    </source>
</evidence>
<evidence type="ECO:0000255" key="2">
    <source>
        <dbReference type="PROSITE-ProRule" id="PRU01202"/>
    </source>
</evidence>
<comment type="catalytic activity">
    <reaction evidence="1">
        <text>(6R)-10-formyltetrahydrofolate + 5-amino-1-(5-phospho-beta-D-ribosyl)imidazole-4-carboxamide = 5-formamido-1-(5-phospho-D-ribosyl)imidazole-4-carboxamide + (6S)-5,6,7,8-tetrahydrofolate</text>
        <dbReference type="Rhea" id="RHEA:22192"/>
        <dbReference type="ChEBI" id="CHEBI:57453"/>
        <dbReference type="ChEBI" id="CHEBI:58467"/>
        <dbReference type="ChEBI" id="CHEBI:58475"/>
        <dbReference type="ChEBI" id="CHEBI:195366"/>
        <dbReference type="EC" id="2.1.2.3"/>
    </reaction>
</comment>
<comment type="catalytic activity">
    <reaction evidence="1">
        <text>IMP + H2O = 5-formamido-1-(5-phospho-D-ribosyl)imidazole-4-carboxamide</text>
        <dbReference type="Rhea" id="RHEA:18445"/>
        <dbReference type="ChEBI" id="CHEBI:15377"/>
        <dbReference type="ChEBI" id="CHEBI:58053"/>
        <dbReference type="ChEBI" id="CHEBI:58467"/>
        <dbReference type="EC" id="3.5.4.10"/>
    </reaction>
</comment>
<comment type="pathway">
    <text evidence="1">Purine metabolism; IMP biosynthesis via de novo pathway; 5-formamido-1-(5-phospho-D-ribosyl)imidazole-4-carboxamide from 5-amino-1-(5-phospho-D-ribosyl)imidazole-4-carboxamide (10-formyl THF route): step 1/1.</text>
</comment>
<comment type="pathway">
    <text evidence="1">Purine metabolism; IMP biosynthesis via de novo pathway; IMP from 5-formamido-1-(5-phospho-D-ribosyl)imidazole-4-carboxamide: step 1/1.</text>
</comment>
<comment type="domain">
    <text evidence="1">The IMP cyclohydrolase activity resides in the N-terminal region.</text>
</comment>
<comment type="similarity">
    <text evidence="1">Belongs to the PurH family.</text>
</comment>